<sequence>MTRPVTLSEPHFSQHTLNKYASLMAQGNGYLGLRASHEEDYTRQTRGMYLAGLYHRAGKGEINELVNLPDVVGMEIAINGEVFSLSHEAWQRELDFASGELRRNVVWRTSNGSGYTIASRRFVSADQLPLIALEITITPLDADASVLISTGIDATQTNHGRQHLDETQVRVFGQHLMQGSYTTQDGRSDVAISCCCKVSGDVQQCYTAKERRLLQHTSAQLHAGETMTLQKLVWIDWRDDRQAALDEWGSASLRQLEMCAQQSYDQLLAASTENWRQWWQKRRITVNGGEAHDQQALDYALYHLRIMTPAHDERSSIAAKGLTGEGYKGHVFWDTEVFLLPFHLFSDPTVARSLLRYRWHNLPGAQEKARRNGWQGALFPWESARSGEEETPEFAAINIRTGLRQKVASAQAEHHLVADIAWAVIQYWQTTGDESFIAHEGMALLLETAKFWISRAVRVNDRLEIHDVIGPDEYTEHVNNNAYTSYMARYNVQQALNIARQFGCSDDAFIHRAEMFLKELWMPEIQPDGVLPQDDSFMAKPAINLAKYKAAAGKQTILLDYSRAEVNEMQILKQADVVMLNYMLPEQFSAASCLANLQFYEPRTIHDSSLSKAIHGIVAARCGLLTQSYQFWREGTEIDLGADPHSCDDGIHAAATGAIWLGAIQGFAGVSVRDGELHLNPALPEQWQQLSFPLFWQGCELQVTLDAQRIAIRTSAPVSLRLNGQLITVAEESVFCLGDFILPFNGTATKHQEDE</sequence>
<proteinExistence type="evidence at protein level"/>
<reference key="1">
    <citation type="journal article" date="1996" name="DNA Res.">
        <title>A 570-kb DNA sequence of the Escherichia coli K-12 genome corresponding to the 28.0-40.1 min region on the linkage map.</title>
        <authorList>
            <person name="Aiba H."/>
            <person name="Baba T."/>
            <person name="Fujita K."/>
            <person name="Hayashi K."/>
            <person name="Inada T."/>
            <person name="Isono K."/>
            <person name="Itoh T."/>
            <person name="Kasai H."/>
            <person name="Kashimoto K."/>
            <person name="Kimura S."/>
            <person name="Kitakawa M."/>
            <person name="Kitagawa M."/>
            <person name="Makino K."/>
            <person name="Miki T."/>
            <person name="Mizobuchi K."/>
            <person name="Mori H."/>
            <person name="Mori T."/>
            <person name="Motomura K."/>
            <person name="Nakade S."/>
            <person name="Nakamura Y."/>
            <person name="Nashimoto H."/>
            <person name="Nishio Y."/>
            <person name="Oshima T."/>
            <person name="Saito N."/>
            <person name="Sampei G."/>
            <person name="Seki Y."/>
            <person name="Sivasundaram S."/>
            <person name="Tagami H."/>
            <person name="Takeda J."/>
            <person name="Takemoto K."/>
            <person name="Takeuchi Y."/>
            <person name="Wada C."/>
            <person name="Yamamoto Y."/>
            <person name="Horiuchi T."/>
        </authorList>
    </citation>
    <scope>NUCLEOTIDE SEQUENCE [LARGE SCALE GENOMIC DNA]</scope>
    <source>
        <strain>K12 / W3110 / ATCC 27325 / DSM 5911</strain>
    </source>
</reference>
<reference key="2">
    <citation type="journal article" date="1997" name="Science">
        <title>The complete genome sequence of Escherichia coli K-12.</title>
        <authorList>
            <person name="Blattner F.R."/>
            <person name="Plunkett G. III"/>
            <person name="Bloch C.A."/>
            <person name="Perna N.T."/>
            <person name="Burland V."/>
            <person name="Riley M."/>
            <person name="Collado-Vides J."/>
            <person name="Glasner J.D."/>
            <person name="Rode C.K."/>
            <person name="Mayhew G.F."/>
            <person name="Gregor J."/>
            <person name="Davis N.W."/>
            <person name="Kirkpatrick H.A."/>
            <person name="Goeden M.A."/>
            <person name="Rose D.J."/>
            <person name="Mau B."/>
            <person name="Shao Y."/>
        </authorList>
    </citation>
    <scope>NUCLEOTIDE SEQUENCE [LARGE SCALE GENOMIC DNA]</scope>
    <source>
        <strain>K12 / MG1655 / ATCC 47076</strain>
    </source>
</reference>
<reference key="3">
    <citation type="journal article" date="2006" name="Mol. Syst. Biol.">
        <title>Highly accurate genome sequences of Escherichia coli K-12 strains MG1655 and W3110.</title>
        <authorList>
            <person name="Hayashi K."/>
            <person name="Morooka N."/>
            <person name="Yamamoto Y."/>
            <person name="Fujita K."/>
            <person name="Isono K."/>
            <person name="Choi S."/>
            <person name="Ohtsubo E."/>
            <person name="Baba T."/>
            <person name="Wanner B.L."/>
            <person name="Mori H."/>
            <person name="Horiuchi T."/>
        </authorList>
    </citation>
    <scope>NUCLEOTIDE SEQUENCE [LARGE SCALE GENOMIC DNA]</scope>
    <source>
        <strain>K12 / W3110 / ATCC 27325 / DSM 5911</strain>
    </source>
</reference>
<reference key="4">
    <citation type="journal article" date="2018" name="Biochemistry">
        <title>Discovery of a kojibiose phosphorylase in Escherichia coli K-12.</title>
        <authorList>
            <person name="Mukherjee K."/>
            <person name="Narindoshvili T."/>
            <person name="Raushel F.M."/>
        </authorList>
    </citation>
    <scope>FUNCTION</scope>
    <scope>CATALYTIC ACTIVITY</scope>
    <scope>SUBSTRATE SPECIFICITY</scope>
    <scope>BIOPHYSICOCHEMICAL PROPERTIES</scope>
    <scope>DISRUPTION PHENOTYPE</scope>
    <source>
        <strain>K12 / BW25113</strain>
        <strain>K12 / MG1655 / ATCC 47076</strain>
    </source>
</reference>
<gene>
    <name type="primary">ycjT</name>
    <name type="ordered locus">b1316</name>
    <name type="ordered locus">JW1309</name>
</gene>
<keyword id="KW-0119">Carbohydrate metabolism</keyword>
<keyword id="KW-0328">Glycosyltransferase</keyword>
<keyword id="KW-1185">Reference proteome</keyword>
<keyword id="KW-0808">Transferase</keyword>
<protein>
    <recommendedName>
        <fullName evidence="3">Kojibiose phosphorylase</fullName>
        <ecNumber evidence="2">2.4.1.230</ecNumber>
    </recommendedName>
</protein>
<evidence type="ECO:0000250" key="1">
    <source>
        <dbReference type="UniProtKB" id="D6XZ22"/>
    </source>
</evidence>
<evidence type="ECO:0000269" key="2">
    <source>
    </source>
</evidence>
<evidence type="ECO:0000303" key="3">
    <source>
    </source>
</evidence>
<evidence type="ECO:0000305" key="4"/>
<name>KOJP_ECOLI</name>
<comment type="function">
    <text evidence="2">In vitro catalyzes the phosphorolysis of D-kojibiose into beta-D-glucose 1-phosphate and D-glucose. No other disaccharides tested substitute for D-kojibiose. In the reverse direction disaccharides can be formed from beta-D-glucose 1-phosphate plus D-glucose, L-sorbose, D-sorbitol, L-iditol or 1,5-anhydro-D-glucitol, but with low efficiency. The beta-D-glucose 1-phosphate product is the substrate for YcjU (AC P77366), the next apparent enzyme in the putative biochemical pathway encoded in this locus (yjcM to ycjW).</text>
</comment>
<comment type="catalytic activity">
    <reaction evidence="2">
        <text>kojibiose + phosphate = beta-D-glucose 1-phosphate + D-glucose</text>
        <dbReference type="Rhea" id="RHEA:11176"/>
        <dbReference type="ChEBI" id="CHEBI:4167"/>
        <dbReference type="ChEBI" id="CHEBI:43474"/>
        <dbReference type="ChEBI" id="CHEBI:57684"/>
        <dbReference type="ChEBI" id="CHEBI:142460"/>
        <dbReference type="EC" id="2.4.1.230"/>
    </reaction>
</comment>
<comment type="biophysicochemical properties">
    <kinetics>
        <KM evidence="2">1.05 mM for kojibiose (at pH 7.5, 30 degrees Celsius)</KM>
        <KM evidence="2">3 mM for phosphate (at pH 7.5, 30 degrees Celsius)</KM>
        <KM evidence="2">1.7 mM for D-glucose (at pH 7.5, 30 degrees Celsius)</KM>
        <text evidence="2">kcat is 1.0 sec(-1) for phosphorolysis of kojibiose, and kcat is 0.8 sec(-1) for the reverse reaction.</text>
    </kinetics>
</comment>
<comment type="disruption phenotype">
    <text evidence="2">No visible phenotype when grown on glucose.</text>
</comment>
<comment type="miscellaneous">
    <text evidence="2">Kojibiose does not support bacterial growth of K12 / BW25113 nor of BL-21(DE3), perhaps because it is not transported into E.coli.</text>
</comment>
<comment type="similarity">
    <text evidence="4">Belongs to the glycosyl hydrolase 65 family.</text>
</comment>
<dbReference type="EC" id="2.4.1.230" evidence="2"/>
<dbReference type="EMBL" id="U00096">
    <property type="protein sequence ID" value="AAC74398.1"/>
    <property type="molecule type" value="Genomic_DNA"/>
</dbReference>
<dbReference type="EMBL" id="AP009048">
    <property type="protein sequence ID" value="BAA14891.1"/>
    <property type="molecule type" value="Genomic_DNA"/>
</dbReference>
<dbReference type="PIR" id="G64880">
    <property type="entry name" value="G64880"/>
</dbReference>
<dbReference type="RefSeq" id="NP_415832.1">
    <property type="nucleotide sequence ID" value="NC_000913.3"/>
</dbReference>
<dbReference type="RefSeq" id="WP_000198036.1">
    <property type="nucleotide sequence ID" value="NZ_SSZK01000012.1"/>
</dbReference>
<dbReference type="SMR" id="P77154"/>
<dbReference type="BioGRID" id="4263194">
    <property type="interactions" value="20"/>
</dbReference>
<dbReference type="FunCoup" id="P77154">
    <property type="interactions" value="97"/>
</dbReference>
<dbReference type="IntAct" id="P77154">
    <property type="interactions" value="1"/>
</dbReference>
<dbReference type="STRING" id="511145.b1316"/>
<dbReference type="CAZy" id="GH65">
    <property type="family name" value="Glycoside Hydrolase Family 65"/>
</dbReference>
<dbReference type="PaxDb" id="511145-b1316"/>
<dbReference type="EnsemblBacteria" id="AAC74398">
    <property type="protein sequence ID" value="AAC74398"/>
    <property type="gene ID" value="b1316"/>
</dbReference>
<dbReference type="GeneID" id="945895"/>
<dbReference type="KEGG" id="ecj:JW1309"/>
<dbReference type="KEGG" id="eco:b1316"/>
<dbReference type="KEGG" id="ecoc:C3026_07710"/>
<dbReference type="PATRIC" id="fig|1411691.4.peg.963"/>
<dbReference type="EchoBASE" id="EB3676"/>
<dbReference type="eggNOG" id="COG1554">
    <property type="taxonomic scope" value="Bacteria"/>
</dbReference>
<dbReference type="HOGENOM" id="CLU_006285_2_1_6"/>
<dbReference type="InParanoid" id="P77154"/>
<dbReference type="OMA" id="EAYCIPF"/>
<dbReference type="OrthoDB" id="9816160at2"/>
<dbReference type="PhylomeDB" id="P77154"/>
<dbReference type="BioCyc" id="EcoCyc:G6654-MONOMER"/>
<dbReference type="BioCyc" id="MetaCyc:G6654-MONOMER"/>
<dbReference type="BRENDA" id="2.4.1.230">
    <property type="organism ID" value="2026"/>
</dbReference>
<dbReference type="SABIO-RK" id="P77154"/>
<dbReference type="STRENDA-DB" id="0TOYQL">
    <property type="experiment" value="Determination of Phosphorylase and hydrolase activity of YcjT"/>
</dbReference>
<dbReference type="PRO" id="PR:P77154"/>
<dbReference type="Proteomes" id="UP000000625">
    <property type="component" value="Chromosome"/>
</dbReference>
<dbReference type="GO" id="GO:0030246">
    <property type="term" value="F:carbohydrate binding"/>
    <property type="evidence" value="ECO:0007669"/>
    <property type="project" value="InterPro"/>
</dbReference>
<dbReference type="GO" id="GO:0004553">
    <property type="term" value="F:hydrolase activity, hydrolyzing O-glycosyl compounds"/>
    <property type="evidence" value="ECO:0000318"/>
    <property type="project" value="GO_Central"/>
</dbReference>
<dbReference type="GO" id="GO:0033831">
    <property type="term" value="F:kojibiose phosphorylase activity"/>
    <property type="evidence" value="ECO:0000314"/>
    <property type="project" value="EcoCyc"/>
</dbReference>
<dbReference type="GO" id="GO:0005975">
    <property type="term" value="P:carbohydrate metabolic process"/>
    <property type="evidence" value="ECO:0000318"/>
    <property type="project" value="GO_Central"/>
</dbReference>
<dbReference type="Gene3D" id="1.50.10.10">
    <property type="match status" value="1"/>
</dbReference>
<dbReference type="Gene3D" id="2.70.98.40">
    <property type="entry name" value="Glycoside hydrolase, family 65, N-terminal domain"/>
    <property type="match status" value="1"/>
</dbReference>
<dbReference type="Gene3D" id="2.60.420.10">
    <property type="entry name" value="Maltose phosphorylase, domain 3"/>
    <property type="match status" value="1"/>
</dbReference>
<dbReference type="InterPro" id="IPR008928">
    <property type="entry name" value="6-hairpin_glycosidase_sf"/>
</dbReference>
<dbReference type="InterPro" id="IPR012341">
    <property type="entry name" value="6hp_glycosidase-like_sf"/>
</dbReference>
<dbReference type="InterPro" id="IPR011013">
    <property type="entry name" value="Gal_mutarotase_sf_dom"/>
</dbReference>
<dbReference type="InterPro" id="IPR005194">
    <property type="entry name" value="Glyco_hydro_65_C"/>
</dbReference>
<dbReference type="InterPro" id="IPR005195">
    <property type="entry name" value="Glyco_hydro_65_M"/>
</dbReference>
<dbReference type="InterPro" id="IPR005196">
    <property type="entry name" value="Glyco_hydro_65_N"/>
</dbReference>
<dbReference type="InterPro" id="IPR037018">
    <property type="entry name" value="Glyco_hydro_65_N_sf"/>
</dbReference>
<dbReference type="InterPro" id="IPR017045">
    <property type="entry name" value="Malt_Pase/Glycosyl_Hdrlase"/>
</dbReference>
<dbReference type="PANTHER" id="PTHR11051">
    <property type="entry name" value="GLYCOSYL HYDROLASE-RELATED"/>
    <property type="match status" value="1"/>
</dbReference>
<dbReference type="PANTHER" id="PTHR11051:SF8">
    <property type="entry name" value="PROTEIN-GLUCOSYLGALACTOSYLHYDROXYLYSINE GLUCOSIDASE"/>
    <property type="match status" value="1"/>
</dbReference>
<dbReference type="Pfam" id="PF03633">
    <property type="entry name" value="Glyco_hydro_65C"/>
    <property type="match status" value="1"/>
</dbReference>
<dbReference type="Pfam" id="PF03632">
    <property type="entry name" value="Glyco_hydro_65m"/>
    <property type="match status" value="1"/>
</dbReference>
<dbReference type="Pfam" id="PF03636">
    <property type="entry name" value="Glyco_hydro_65N"/>
    <property type="match status" value="1"/>
</dbReference>
<dbReference type="PIRSF" id="PIRSF036289">
    <property type="entry name" value="Glycosyl_hydrolase_malt_phosph"/>
    <property type="match status" value="1"/>
</dbReference>
<dbReference type="SUPFAM" id="SSF74650">
    <property type="entry name" value="Galactose mutarotase-like"/>
    <property type="match status" value="1"/>
</dbReference>
<dbReference type="SUPFAM" id="SSF48208">
    <property type="entry name" value="Six-hairpin glycosidases"/>
    <property type="match status" value="1"/>
</dbReference>
<organism>
    <name type="scientific">Escherichia coli (strain K12)</name>
    <dbReference type="NCBI Taxonomy" id="83333"/>
    <lineage>
        <taxon>Bacteria</taxon>
        <taxon>Pseudomonadati</taxon>
        <taxon>Pseudomonadota</taxon>
        <taxon>Gammaproteobacteria</taxon>
        <taxon>Enterobacterales</taxon>
        <taxon>Enterobacteriaceae</taxon>
        <taxon>Escherichia</taxon>
    </lineage>
</organism>
<accession>P77154</accession>
<feature type="chain" id="PRO_0000108017" description="Kojibiose phosphorylase">
    <location>
        <begin position="1"/>
        <end position="755"/>
    </location>
</feature>
<feature type="active site" description="Proton donor" evidence="1">
    <location>
        <position position="473"/>
    </location>
</feature>
<feature type="binding site" evidence="1">
    <location>
        <begin position="333"/>
        <end position="334"/>
    </location>
    <ligand>
        <name>substrate</name>
    </ligand>
</feature>
<feature type="binding site" evidence="1">
    <location>
        <begin position="573"/>
        <end position="574"/>
    </location>
    <ligand>
        <name>substrate</name>
    </ligand>
</feature>